<proteinExistence type="evidence at transcript level"/>
<gene>
    <name evidence="6" type="primary">TBC1D3E</name>
</gene>
<sequence>MDVVEVAGSWWAQEREDIIMKYEKGHRAGLPEDKGPKPFRSYNNNVDHLGIVHETELPPLTAREAKQIRREISRKSKWVDMLGDWEKYKSSRKLIDQAYKGMPMNIRGPMWSVLLNTEEMKLKNPGRYQIMKEKGKKSSEHIQRIDRDVSGTLRKHIFFRDRYGTKQRELLHILLAYEEYNPEVGYCRDLSHIAALFLLYLPEEDAFWALVQLLASERHSLQGFHSPNGGTVQGLQDQQEHVVATSQPKTMGHQDKKDLCGQCSPLGCLIRILIDGISLGLTLRLWDVYLVEGEQALMPITRIAFKVQQKRLTKTSRCGPWARFCNRFVDTWARDEDTVLKHLRASMKKLTRKKGDLPPPAKPEQGSSASRPVPASRGGKTLCKGDRQAPPGPPARFPRPIWSASPPRAPRSSTPCPGGAVREDTYPVGTQGVPSPALAQGGPQGSWRFLQWNSMPRLPTDLDVEGPWFRHYDFRQSCWVRAISQEDQLAPCWQAEHPAERVRSAFAAPSTDSDQGTPFRARDEQQCAPTSGPCLCGLHLESSQFPPGF</sequence>
<comment type="function">
    <text evidence="1">Acts as a GTPase activating protein for RAB5. Does not act on RAB4 or RAB11 (By similarity).</text>
</comment>
<comment type="subcellular location">
    <subcellularLocation>
        <location evidence="1">Cell membrane</location>
        <topology evidence="1">Lipid-anchor</topology>
    </subcellularLocation>
    <text evidence="1">Associated with lipid rafts.</text>
</comment>
<comment type="tissue specificity">
    <text evidence="4">Expressed in pancreas, thymus and testis.</text>
</comment>
<comment type="PTM">
    <text evidence="1">Ubiquitinated by a CUL7-based E3 ligase, which leads to proteasomal degradation.</text>
</comment>
<comment type="PTM">
    <text evidence="1">Palmitoylation is required for membrane localization and protects TBC1D3 from ubiquitination.</text>
</comment>
<comment type="miscellaneous">
    <text evidence="5">TBC1D3 is encoded by a collection of very similar paralogs with multiple copies of each paralog, some human genomes encoding well over 50 copies depending on ethnic origin of the donor.</text>
</comment>
<protein>
    <recommendedName>
        <fullName evidence="6">TBC1 domain family member 3E</fullName>
    </recommendedName>
</protein>
<dbReference type="EMBL" id="AC233968">
    <property type="status" value="NOT_ANNOTATED_CDS"/>
    <property type="molecule type" value="Genomic_DNA"/>
</dbReference>
<dbReference type="CCDS" id="CCDS77009.1"/>
<dbReference type="RefSeq" id="NP_001278395.1">
    <property type="nucleotide sequence ID" value="NM_001291466.2"/>
</dbReference>
<dbReference type="RefSeq" id="XP_006722317.1">
    <property type="nucleotide sequence ID" value="XM_006722254.3"/>
</dbReference>
<dbReference type="SMR" id="A0A087X179"/>
<dbReference type="FunCoup" id="A0A087X179">
    <property type="interactions" value="52"/>
</dbReference>
<dbReference type="IntAct" id="A0A087X179">
    <property type="interactions" value="1"/>
</dbReference>
<dbReference type="BioMuta" id="TBC1D3E"/>
<dbReference type="jPOST" id="A0A087X179"/>
<dbReference type="MassIVE" id="A0A087X179"/>
<dbReference type="PaxDb" id="9606-ENSP00000483965"/>
<dbReference type="PeptideAtlas" id="A0A087X179"/>
<dbReference type="Antibodypedia" id="74218">
    <property type="antibodies" value="2 antibodies from 1 providers"/>
</dbReference>
<dbReference type="DNASU" id="102723859"/>
<dbReference type="Ensembl" id="ENST00000621587.2">
    <property type="protein sequence ID" value="ENSP00000483965.1"/>
    <property type="gene ID" value="ENSG00000278599.6"/>
</dbReference>
<dbReference type="GeneID" id="102723859"/>
<dbReference type="KEGG" id="hsa:102723859"/>
<dbReference type="MANE-Select" id="ENST00000621587.2">
    <property type="protein sequence ID" value="ENSP00000483965.1"/>
    <property type="RefSeq nucleotide sequence ID" value="NM_001291466.2"/>
    <property type="RefSeq protein sequence ID" value="NP_001278395.1"/>
</dbReference>
<dbReference type="UCSC" id="uc032fgg.2">
    <property type="organism name" value="human"/>
</dbReference>
<dbReference type="AGR" id="HGNC:27071"/>
<dbReference type="CTD" id="102723859"/>
<dbReference type="GeneCards" id="TBC1D3E"/>
<dbReference type="HGNC" id="HGNC:27071">
    <property type="gene designation" value="TBC1D3E"/>
</dbReference>
<dbReference type="HPA" id="ENSG00000278599">
    <property type="expression patterns" value="Tissue enhanced (testis)"/>
</dbReference>
<dbReference type="neXtProt" id="NX_A0A087X179"/>
<dbReference type="VEuPathDB" id="HostDB:ENSG00000278599"/>
<dbReference type="eggNOG" id="KOG1102">
    <property type="taxonomic scope" value="Eukaryota"/>
</dbReference>
<dbReference type="GeneTree" id="ENSGT00940000163624"/>
<dbReference type="InParanoid" id="A0A087X179"/>
<dbReference type="OrthoDB" id="9535050at2759"/>
<dbReference type="PAN-GO" id="A0A087X179">
    <property type="GO annotations" value="2 GO annotations based on evolutionary models"/>
</dbReference>
<dbReference type="PathwayCommons" id="A0A087X179"/>
<dbReference type="BioGRID-ORCS" id="102723859">
    <property type="hits" value="5 hits in 115 CRISPR screens"/>
</dbReference>
<dbReference type="GenomeRNAi" id="102723859"/>
<dbReference type="Pharos" id="A0A087X179">
    <property type="development level" value="Tdark"/>
</dbReference>
<dbReference type="PRO" id="PR:A0A087X179"/>
<dbReference type="Proteomes" id="UP000005640">
    <property type="component" value="Chromosome 17"/>
</dbReference>
<dbReference type="RNAct" id="A0A087X179">
    <property type="molecule type" value="protein"/>
</dbReference>
<dbReference type="Bgee" id="ENSG00000278599">
    <property type="expression patterns" value="Expressed in male germ line stem cell (sensu Vertebrata) in testis and 82 other cell types or tissues"/>
</dbReference>
<dbReference type="GO" id="GO:0005886">
    <property type="term" value="C:plasma membrane"/>
    <property type="evidence" value="ECO:0007669"/>
    <property type="project" value="UniProtKB-SubCell"/>
</dbReference>
<dbReference type="GO" id="GO:0005096">
    <property type="term" value="F:GTPase activator activity"/>
    <property type="evidence" value="ECO:0000318"/>
    <property type="project" value="GO_Central"/>
</dbReference>
<dbReference type="FunFam" id="1.10.10.750:FF:000001">
    <property type="entry name" value="TBC1 domain family member 10A"/>
    <property type="match status" value="1"/>
</dbReference>
<dbReference type="FunFam" id="1.10.8.270:FF:000016">
    <property type="entry name" value="TBC1 domain family member 2A"/>
    <property type="match status" value="1"/>
</dbReference>
<dbReference type="FunFam" id="1.10.472.80:FF:000058">
    <property type="entry name" value="Ubiquitin specific peptidase 6"/>
    <property type="match status" value="1"/>
</dbReference>
<dbReference type="Gene3D" id="1.10.8.270">
    <property type="entry name" value="putative rabgap domain of human tbc1 domain family member 14 like domains"/>
    <property type="match status" value="1"/>
</dbReference>
<dbReference type="Gene3D" id="1.10.472.80">
    <property type="entry name" value="Ypt/Rab-GAP domain of gyp1p, domain 3"/>
    <property type="match status" value="1"/>
</dbReference>
<dbReference type="InterPro" id="IPR000195">
    <property type="entry name" value="Rab-GAP-TBC_dom"/>
</dbReference>
<dbReference type="InterPro" id="IPR035969">
    <property type="entry name" value="Rab-GAP_TBC_sf"/>
</dbReference>
<dbReference type="InterPro" id="IPR050302">
    <property type="entry name" value="Rab_GAP_TBC_domain"/>
</dbReference>
<dbReference type="PANTHER" id="PTHR47219">
    <property type="entry name" value="RAB GTPASE-ACTIVATING PROTEIN 1-LIKE"/>
    <property type="match status" value="1"/>
</dbReference>
<dbReference type="PANTHER" id="PTHR47219:SF25">
    <property type="entry name" value="RAB-GAP TBC DOMAIN-CONTAINING PROTEIN"/>
    <property type="match status" value="1"/>
</dbReference>
<dbReference type="Pfam" id="PF00566">
    <property type="entry name" value="RabGAP-TBC"/>
    <property type="match status" value="1"/>
</dbReference>
<dbReference type="SMART" id="SM00164">
    <property type="entry name" value="TBC"/>
    <property type="match status" value="1"/>
</dbReference>
<dbReference type="SUPFAM" id="SSF47923">
    <property type="entry name" value="Ypt/Rab-GAP domain of gyp1p"/>
    <property type="match status" value="1"/>
</dbReference>
<dbReference type="PROSITE" id="PS50086">
    <property type="entry name" value="TBC_RABGAP"/>
    <property type="match status" value="1"/>
</dbReference>
<feature type="chain" id="PRO_0000431605" description="TBC1 domain family member 3E">
    <location>
        <begin position="1"/>
        <end position="549"/>
    </location>
</feature>
<feature type="domain" description="Rab-GAP TBC" evidence="2">
    <location>
        <begin position="101"/>
        <end position="293"/>
    </location>
</feature>
<feature type="region of interest" description="Disordered" evidence="3">
    <location>
        <begin position="350"/>
        <end position="419"/>
    </location>
</feature>
<feature type="compositionally biased region" description="Low complexity" evidence="3">
    <location>
        <begin position="398"/>
        <end position="417"/>
    </location>
</feature>
<feature type="lipid moiety-binding region" description="S-palmitoyl cysteine" evidence="1">
    <location>
        <position position="318"/>
    </location>
</feature>
<feature type="lipid moiety-binding region" description="S-palmitoyl cysteine" evidence="1">
    <location>
        <position position="325"/>
    </location>
</feature>
<reference key="1">
    <citation type="journal article" date="2006" name="Nature">
        <title>DNA sequence of human chromosome 17 and analysis of rearrangement in the human lineage.</title>
        <authorList>
            <person name="Zody M.C."/>
            <person name="Garber M."/>
            <person name="Adams D.J."/>
            <person name="Sharpe T."/>
            <person name="Harrow J."/>
            <person name="Lupski J.R."/>
            <person name="Nicholson C."/>
            <person name="Searle S.M."/>
            <person name="Wilming L."/>
            <person name="Young S.K."/>
            <person name="Abouelleil A."/>
            <person name="Allen N.R."/>
            <person name="Bi W."/>
            <person name="Bloom T."/>
            <person name="Borowsky M.L."/>
            <person name="Bugalter B.E."/>
            <person name="Butler J."/>
            <person name="Chang J.L."/>
            <person name="Chen C.-K."/>
            <person name="Cook A."/>
            <person name="Corum B."/>
            <person name="Cuomo C.A."/>
            <person name="de Jong P.J."/>
            <person name="DeCaprio D."/>
            <person name="Dewar K."/>
            <person name="FitzGerald M."/>
            <person name="Gilbert J."/>
            <person name="Gibson R."/>
            <person name="Gnerre S."/>
            <person name="Goldstein S."/>
            <person name="Grafham D.V."/>
            <person name="Grocock R."/>
            <person name="Hafez N."/>
            <person name="Hagopian D.S."/>
            <person name="Hart E."/>
            <person name="Norman C.H."/>
            <person name="Humphray S."/>
            <person name="Jaffe D.B."/>
            <person name="Jones M."/>
            <person name="Kamal M."/>
            <person name="Khodiyar V.K."/>
            <person name="LaButti K."/>
            <person name="Laird G."/>
            <person name="Lehoczky J."/>
            <person name="Liu X."/>
            <person name="Lokyitsang T."/>
            <person name="Loveland J."/>
            <person name="Lui A."/>
            <person name="Macdonald P."/>
            <person name="Major J.E."/>
            <person name="Matthews L."/>
            <person name="Mauceli E."/>
            <person name="McCarroll S.A."/>
            <person name="Mihalev A.H."/>
            <person name="Mudge J."/>
            <person name="Nguyen C."/>
            <person name="Nicol R."/>
            <person name="O'Leary S.B."/>
            <person name="Osoegawa K."/>
            <person name="Schwartz D.C."/>
            <person name="Shaw-Smith C."/>
            <person name="Stankiewicz P."/>
            <person name="Steward C."/>
            <person name="Swarbreck D."/>
            <person name="Venkataraman V."/>
            <person name="Whittaker C.A."/>
            <person name="Yang X."/>
            <person name="Zimmer A.R."/>
            <person name="Bradley A."/>
            <person name="Hubbard T."/>
            <person name="Birren B.W."/>
            <person name="Rogers J."/>
            <person name="Lander E.S."/>
            <person name="Nusbaum C."/>
        </authorList>
    </citation>
    <scope>NUCLEOTIDE SEQUENCE [LARGE SCALE GENOMIC DNA]</scope>
</reference>
<reference key="2">
    <citation type="journal article" date="2006" name="Genomics">
        <title>TBC1D3, a hominoid oncoprotein, is encoded by a cluster of paralogues located on chromosome 17q12.</title>
        <authorList>
            <person name="Hodzic D."/>
            <person name="Kong C."/>
            <person name="Wainszelbaum M.J."/>
            <person name="Charron A.J."/>
            <person name="Su X."/>
            <person name="Stahl P.D."/>
        </authorList>
    </citation>
    <scope>NOMENCLATURE</scope>
    <scope>TISSUE SPECIFICITY</scope>
</reference>
<reference key="3">
    <citation type="journal article" date="2010" name="Science">
        <title>Diversity of human copy number variation and multicopy genes.</title>
        <authorList>
            <person name="Sudmant P.H."/>
            <person name="Kitzman J.O."/>
            <person name="Antonacci F."/>
            <person name="Alkan C."/>
            <person name="Malig M."/>
            <person name="Tsalenko A."/>
            <person name="Sampas N."/>
            <person name="Bruhn L."/>
            <person name="Shendure J."/>
            <person name="Eichler E.E."/>
        </authorList>
    </citation>
    <scope>MISCELLANEOUS</scope>
    <scope>COPY NUMBER VARIATION</scope>
</reference>
<name>TBC3E_HUMAN</name>
<keyword id="KW-1003">Cell membrane</keyword>
<keyword id="KW-0343">GTPase activation</keyword>
<keyword id="KW-0449">Lipoprotein</keyword>
<keyword id="KW-0472">Membrane</keyword>
<keyword id="KW-0564">Palmitate</keyword>
<keyword id="KW-1185">Reference proteome</keyword>
<keyword id="KW-0832">Ubl conjugation</keyword>
<accession>A0A087X179</accession>
<evidence type="ECO:0000250" key="1">
    <source>
        <dbReference type="UniProtKB" id="Q8IZP1"/>
    </source>
</evidence>
<evidence type="ECO:0000255" key="2">
    <source>
        <dbReference type="PROSITE-ProRule" id="PRU00163"/>
    </source>
</evidence>
<evidence type="ECO:0000256" key="3">
    <source>
        <dbReference type="SAM" id="MobiDB-lite"/>
    </source>
</evidence>
<evidence type="ECO:0000269" key="4">
    <source>
    </source>
</evidence>
<evidence type="ECO:0000305" key="5"/>
<evidence type="ECO:0000312" key="6">
    <source>
        <dbReference type="HGNC" id="HGNC:27071"/>
    </source>
</evidence>
<organism>
    <name type="scientific">Homo sapiens</name>
    <name type="common">Human</name>
    <dbReference type="NCBI Taxonomy" id="9606"/>
    <lineage>
        <taxon>Eukaryota</taxon>
        <taxon>Metazoa</taxon>
        <taxon>Chordata</taxon>
        <taxon>Craniata</taxon>
        <taxon>Vertebrata</taxon>
        <taxon>Euteleostomi</taxon>
        <taxon>Mammalia</taxon>
        <taxon>Eutheria</taxon>
        <taxon>Euarchontoglires</taxon>
        <taxon>Primates</taxon>
        <taxon>Haplorrhini</taxon>
        <taxon>Catarrhini</taxon>
        <taxon>Hominidae</taxon>
        <taxon>Homo</taxon>
    </lineage>
</organism>